<protein>
    <recommendedName>
        <fullName evidence="1">Thiosulfate sulfurtransferase GlpE</fullName>
        <ecNumber evidence="1">2.8.1.1</ecNumber>
    </recommendedName>
</protein>
<accession>A7MXX7</accession>
<reference key="1">
    <citation type="submission" date="2007-08" db="EMBL/GenBank/DDBJ databases">
        <authorList>
            <consortium name="The Vibrio harveyi Genome Sequencing Project"/>
            <person name="Bassler B."/>
            <person name="Clifton S.W."/>
            <person name="Fulton L."/>
            <person name="Delehaunty K."/>
            <person name="Fronick C."/>
            <person name="Harrison M."/>
            <person name="Markivic C."/>
            <person name="Fulton R."/>
            <person name="Tin-Wollam A.-M."/>
            <person name="Shah N."/>
            <person name="Pepin K."/>
            <person name="Nash W."/>
            <person name="Thiruvilangam P."/>
            <person name="Bhonagiri V."/>
            <person name="Waters C."/>
            <person name="Tu K.C."/>
            <person name="Irgon J."/>
            <person name="Wilson R.K."/>
        </authorList>
    </citation>
    <scope>NUCLEOTIDE SEQUENCE [LARGE SCALE GENOMIC DNA]</scope>
    <source>
        <strain>ATCC BAA-1116 / BB120</strain>
    </source>
</reference>
<dbReference type="EC" id="2.8.1.1" evidence="1"/>
<dbReference type="EMBL" id="CP000789">
    <property type="protein sequence ID" value="ABU69304.1"/>
    <property type="molecule type" value="Genomic_DNA"/>
</dbReference>
<dbReference type="RefSeq" id="WP_010650540.1">
    <property type="nucleotide sequence ID" value="NC_022269.1"/>
</dbReference>
<dbReference type="SMR" id="A7MXX7"/>
<dbReference type="KEGG" id="vha:VIBHAR_00276"/>
<dbReference type="PATRIC" id="fig|338187.25.peg.2293"/>
<dbReference type="Proteomes" id="UP000008152">
    <property type="component" value="Chromosome I"/>
</dbReference>
<dbReference type="GO" id="GO:0005737">
    <property type="term" value="C:cytoplasm"/>
    <property type="evidence" value="ECO:0007669"/>
    <property type="project" value="UniProtKB-SubCell"/>
</dbReference>
<dbReference type="GO" id="GO:0004792">
    <property type="term" value="F:thiosulfate-cyanide sulfurtransferase activity"/>
    <property type="evidence" value="ECO:0007669"/>
    <property type="project" value="UniProtKB-UniRule"/>
</dbReference>
<dbReference type="GO" id="GO:0006071">
    <property type="term" value="P:glycerol metabolic process"/>
    <property type="evidence" value="ECO:0007669"/>
    <property type="project" value="UniProtKB-UniRule"/>
</dbReference>
<dbReference type="CDD" id="cd01444">
    <property type="entry name" value="GlpE_ST"/>
    <property type="match status" value="1"/>
</dbReference>
<dbReference type="Gene3D" id="3.40.250.10">
    <property type="entry name" value="Rhodanese-like domain"/>
    <property type="match status" value="1"/>
</dbReference>
<dbReference type="HAMAP" id="MF_01009">
    <property type="entry name" value="Thiosulf_sulfurtr"/>
    <property type="match status" value="1"/>
</dbReference>
<dbReference type="InterPro" id="IPR050229">
    <property type="entry name" value="GlpE_sulfurtransferase"/>
</dbReference>
<dbReference type="InterPro" id="IPR001763">
    <property type="entry name" value="Rhodanese-like_dom"/>
</dbReference>
<dbReference type="InterPro" id="IPR036873">
    <property type="entry name" value="Rhodanese-like_dom_sf"/>
</dbReference>
<dbReference type="InterPro" id="IPR023695">
    <property type="entry name" value="Thiosulf_sulfurTrfase"/>
</dbReference>
<dbReference type="NCBIfam" id="NF001195">
    <property type="entry name" value="PRK00162.1"/>
    <property type="match status" value="1"/>
</dbReference>
<dbReference type="PANTHER" id="PTHR43031">
    <property type="entry name" value="FAD-DEPENDENT OXIDOREDUCTASE"/>
    <property type="match status" value="1"/>
</dbReference>
<dbReference type="PANTHER" id="PTHR43031:SF6">
    <property type="entry name" value="THIOSULFATE SULFURTRANSFERASE GLPE"/>
    <property type="match status" value="1"/>
</dbReference>
<dbReference type="Pfam" id="PF00581">
    <property type="entry name" value="Rhodanese"/>
    <property type="match status" value="1"/>
</dbReference>
<dbReference type="SMART" id="SM00450">
    <property type="entry name" value="RHOD"/>
    <property type="match status" value="1"/>
</dbReference>
<dbReference type="SUPFAM" id="SSF52821">
    <property type="entry name" value="Rhodanese/Cell cycle control phosphatase"/>
    <property type="match status" value="1"/>
</dbReference>
<dbReference type="PROSITE" id="PS50206">
    <property type="entry name" value="RHODANESE_3"/>
    <property type="match status" value="1"/>
</dbReference>
<proteinExistence type="inferred from homology"/>
<name>GLPE_VIBC1</name>
<evidence type="ECO:0000255" key="1">
    <source>
        <dbReference type="HAMAP-Rule" id="MF_01009"/>
    </source>
</evidence>
<keyword id="KW-0963">Cytoplasm</keyword>
<keyword id="KW-0808">Transferase</keyword>
<comment type="function">
    <text evidence="1">Transferase that catalyzes the transfer of sulfur from thiosulfate to thiophilic acceptors such as cyanide or dithiols. May function in a CysM-independent thiosulfate assimilation pathway by catalyzing the conversion of thiosulfate to sulfite, which can then be used for L-cysteine biosynthesis.</text>
</comment>
<comment type="catalytic activity">
    <reaction evidence="1">
        <text>thiosulfate + hydrogen cyanide = thiocyanate + sulfite + 2 H(+)</text>
        <dbReference type="Rhea" id="RHEA:16881"/>
        <dbReference type="ChEBI" id="CHEBI:15378"/>
        <dbReference type="ChEBI" id="CHEBI:17359"/>
        <dbReference type="ChEBI" id="CHEBI:18022"/>
        <dbReference type="ChEBI" id="CHEBI:18407"/>
        <dbReference type="ChEBI" id="CHEBI:33542"/>
        <dbReference type="EC" id="2.8.1.1"/>
    </reaction>
</comment>
<comment type="catalytic activity">
    <reaction evidence="1">
        <text>thiosulfate + [thioredoxin]-dithiol = [thioredoxin]-disulfide + hydrogen sulfide + sulfite + 2 H(+)</text>
        <dbReference type="Rhea" id="RHEA:83859"/>
        <dbReference type="Rhea" id="RHEA-COMP:10698"/>
        <dbReference type="Rhea" id="RHEA-COMP:10700"/>
        <dbReference type="ChEBI" id="CHEBI:15378"/>
        <dbReference type="ChEBI" id="CHEBI:17359"/>
        <dbReference type="ChEBI" id="CHEBI:29919"/>
        <dbReference type="ChEBI" id="CHEBI:29950"/>
        <dbReference type="ChEBI" id="CHEBI:33542"/>
        <dbReference type="ChEBI" id="CHEBI:50058"/>
    </reaction>
</comment>
<comment type="subcellular location">
    <subcellularLocation>
        <location evidence="1">Cytoplasm</location>
    </subcellularLocation>
</comment>
<comment type="similarity">
    <text evidence="1">Belongs to the GlpE family.</text>
</comment>
<gene>
    <name evidence="1" type="primary">glpE</name>
    <name type="ordered locus">VIBHAR_00276</name>
</gene>
<sequence>MDQFQHIDVQGAQALLEQSEAKLVDIRDPQSFAVAHAESAFHLTNDSIVSFMNDVEFEQPILVMCYHGISSQGAAQYLVNQGFEQVYSVDGGFEAWQRAELPIVRS</sequence>
<feature type="chain" id="PRO_1000062983" description="Thiosulfate sulfurtransferase GlpE">
    <location>
        <begin position="1"/>
        <end position="106"/>
    </location>
</feature>
<feature type="domain" description="Rhodanese" evidence="1">
    <location>
        <begin position="17"/>
        <end position="105"/>
    </location>
</feature>
<feature type="active site" description="Cysteine persulfide intermediate" evidence="1">
    <location>
        <position position="65"/>
    </location>
</feature>
<organism>
    <name type="scientific">Vibrio campbellii (strain ATCC BAA-1116)</name>
    <dbReference type="NCBI Taxonomy" id="2902295"/>
    <lineage>
        <taxon>Bacteria</taxon>
        <taxon>Pseudomonadati</taxon>
        <taxon>Pseudomonadota</taxon>
        <taxon>Gammaproteobacteria</taxon>
        <taxon>Vibrionales</taxon>
        <taxon>Vibrionaceae</taxon>
        <taxon>Vibrio</taxon>
    </lineage>
</organism>